<sequence>MSEPLGLFGGTFDPVHFGHLRLAEESIAHLGLGGVRWIPAGQPPHRGVPQVTAQQRLEMVRLAMANNARFSLDPSEVEAEAPSYTVHTLERLRRELGPLQSLVLLVGADAFAGLATWHRWRDIFALAHVAVSHRPGFPVEISSLPHELASEFTDRRRADVRGLKASPAGGIVTFAMTQLAISATQIRKLLANELSARYLLPDSVLDYIQTHSLYRNS</sequence>
<comment type="function">
    <text evidence="1">Catalyzes the reversible adenylation of nicotinate mononucleotide (NaMN) to nicotinic acid adenine dinucleotide (NaAD).</text>
</comment>
<comment type="catalytic activity">
    <reaction evidence="1">
        <text>nicotinate beta-D-ribonucleotide + ATP + H(+) = deamido-NAD(+) + diphosphate</text>
        <dbReference type="Rhea" id="RHEA:22860"/>
        <dbReference type="ChEBI" id="CHEBI:15378"/>
        <dbReference type="ChEBI" id="CHEBI:30616"/>
        <dbReference type="ChEBI" id="CHEBI:33019"/>
        <dbReference type="ChEBI" id="CHEBI:57502"/>
        <dbReference type="ChEBI" id="CHEBI:58437"/>
        <dbReference type="EC" id="2.7.7.18"/>
    </reaction>
</comment>
<comment type="pathway">
    <text evidence="1">Cofactor biosynthesis; NAD(+) biosynthesis; deamido-NAD(+) from nicotinate D-ribonucleotide: step 1/1.</text>
</comment>
<comment type="similarity">
    <text evidence="1">Belongs to the NadD family.</text>
</comment>
<keyword id="KW-0067">ATP-binding</keyword>
<keyword id="KW-0520">NAD</keyword>
<keyword id="KW-0547">Nucleotide-binding</keyword>
<keyword id="KW-0548">Nucleotidyltransferase</keyword>
<keyword id="KW-0662">Pyridine nucleotide biosynthesis</keyword>
<keyword id="KW-0808">Transferase</keyword>
<reference key="1">
    <citation type="journal article" date="2009" name="BMC Genomics">
        <title>Metabolic analysis of the soil microbe Dechloromonas aromatica str. RCB: indications of a surprisingly complex life-style and cryptic anaerobic pathways for aromatic degradation.</title>
        <authorList>
            <person name="Salinero K.K."/>
            <person name="Keller K."/>
            <person name="Feil W.S."/>
            <person name="Feil H."/>
            <person name="Trong S."/>
            <person name="Di Bartolo G."/>
            <person name="Lapidus A."/>
        </authorList>
    </citation>
    <scope>NUCLEOTIDE SEQUENCE [LARGE SCALE GENOMIC DNA]</scope>
    <source>
        <strain>RCB</strain>
    </source>
</reference>
<feature type="chain" id="PRO_0000310113" description="Probable nicotinate-nucleotide adenylyltransferase">
    <location>
        <begin position="1"/>
        <end position="217"/>
    </location>
</feature>
<evidence type="ECO:0000255" key="1">
    <source>
        <dbReference type="HAMAP-Rule" id="MF_00244"/>
    </source>
</evidence>
<gene>
    <name evidence="1" type="primary">nadD</name>
    <name type="ordered locus">Daro_0169</name>
</gene>
<accession>Q47JQ3</accession>
<dbReference type="EC" id="2.7.7.18" evidence="1"/>
<dbReference type="EMBL" id="CP000089">
    <property type="protein sequence ID" value="AAZ44928.1"/>
    <property type="molecule type" value="Genomic_DNA"/>
</dbReference>
<dbReference type="SMR" id="Q47JQ3"/>
<dbReference type="STRING" id="159087.Daro_0169"/>
<dbReference type="KEGG" id="dar:Daro_0169"/>
<dbReference type="eggNOG" id="COG1057">
    <property type="taxonomic scope" value="Bacteria"/>
</dbReference>
<dbReference type="HOGENOM" id="CLU_069765_0_0_4"/>
<dbReference type="OrthoDB" id="5295945at2"/>
<dbReference type="UniPathway" id="UPA00253">
    <property type="reaction ID" value="UER00332"/>
</dbReference>
<dbReference type="GO" id="GO:0005524">
    <property type="term" value="F:ATP binding"/>
    <property type="evidence" value="ECO:0007669"/>
    <property type="project" value="UniProtKB-KW"/>
</dbReference>
<dbReference type="GO" id="GO:0004515">
    <property type="term" value="F:nicotinate-nucleotide adenylyltransferase activity"/>
    <property type="evidence" value="ECO:0007669"/>
    <property type="project" value="UniProtKB-UniRule"/>
</dbReference>
<dbReference type="GO" id="GO:0009435">
    <property type="term" value="P:NAD biosynthetic process"/>
    <property type="evidence" value="ECO:0007669"/>
    <property type="project" value="UniProtKB-UniRule"/>
</dbReference>
<dbReference type="CDD" id="cd02165">
    <property type="entry name" value="NMNAT"/>
    <property type="match status" value="1"/>
</dbReference>
<dbReference type="Gene3D" id="3.40.50.620">
    <property type="entry name" value="HUPs"/>
    <property type="match status" value="1"/>
</dbReference>
<dbReference type="HAMAP" id="MF_00244">
    <property type="entry name" value="NaMN_adenylyltr"/>
    <property type="match status" value="1"/>
</dbReference>
<dbReference type="InterPro" id="IPR004821">
    <property type="entry name" value="Cyt_trans-like"/>
</dbReference>
<dbReference type="InterPro" id="IPR005248">
    <property type="entry name" value="NadD/NMNAT"/>
</dbReference>
<dbReference type="InterPro" id="IPR014729">
    <property type="entry name" value="Rossmann-like_a/b/a_fold"/>
</dbReference>
<dbReference type="NCBIfam" id="TIGR00125">
    <property type="entry name" value="cyt_tran_rel"/>
    <property type="match status" value="1"/>
</dbReference>
<dbReference type="NCBIfam" id="TIGR00482">
    <property type="entry name" value="nicotinate (nicotinamide) nucleotide adenylyltransferase"/>
    <property type="match status" value="1"/>
</dbReference>
<dbReference type="NCBIfam" id="NF000839">
    <property type="entry name" value="PRK00071.1-1"/>
    <property type="match status" value="1"/>
</dbReference>
<dbReference type="NCBIfam" id="NF000840">
    <property type="entry name" value="PRK00071.1-3"/>
    <property type="match status" value="1"/>
</dbReference>
<dbReference type="PANTHER" id="PTHR39321">
    <property type="entry name" value="NICOTINATE-NUCLEOTIDE ADENYLYLTRANSFERASE-RELATED"/>
    <property type="match status" value="1"/>
</dbReference>
<dbReference type="PANTHER" id="PTHR39321:SF3">
    <property type="entry name" value="PHOSPHOPANTETHEINE ADENYLYLTRANSFERASE"/>
    <property type="match status" value="1"/>
</dbReference>
<dbReference type="Pfam" id="PF01467">
    <property type="entry name" value="CTP_transf_like"/>
    <property type="match status" value="1"/>
</dbReference>
<dbReference type="SUPFAM" id="SSF52374">
    <property type="entry name" value="Nucleotidylyl transferase"/>
    <property type="match status" value="1"/>
</dbReference>
<protein>
    <recommendedName>
        <fullName evidence="1">Probable nicotinate-nucleotide adenylyltransferase</fullName>
        <ecNumber evidence="1">2.7.7.18</ecNumber>
    </recommendedName>
    <alternativeName>
        <fullName evidence="1">Deamido-NAD(+) diphosphorylase</fullName>
    </alternativeName>
    <alternativeName>
        <fullName evidence="1">Deamido-NAD(+) pyrophosphorylase</fullName>
    </alternativeName>
    <alternativeName>
        <fullName evidence="1">Nicotinate mononucleotide adenylyltransferase</fullName>
        <shortName evidence="1">NaMN adenylyltransferase</shortName>
    </alternativeName>
</protein>
<name>NADD_DECAR</name>
<proteinExistence type="inferred from homology"/>
<organism>
    <name type="scientific">Dechloromonas aromatica (strain RCB)</name>
    <dbReference type="NCBI Taxonomy" id="159087"/>
    <lineage>
        <taxon>Bacteria</taxon>
        <taxon>Pseudomonadati</taxon>
        <taxon>Pseudomonadota</taxon>
        <taxon>Betaproteobacteria</taxon>
        <taxon>Rhodocyclales</taxon>
        <taxon>Azonexaceae</taxon>
        <taxon>Dechloromonas</taxon>
    </lineage>
</organism>